<feature type="chain" id="PRO_0000262400" description="N-succinylglutamate 5-semialdehyde dehydrogenase">
    <location>
        <begin position="1"/>
        <end position="492"/>
    </location>
</feature>
<feature type="active site" evidence="1">
    <location>
        <position position="243"/>
    </location>
</feature>
<feature type="active site" evidence="1">
    <location>
        <position position="277"/>
    </location>
</feature>
<feature type="binding site" evidence="1">
    <location>
        <begin position="220"/>
        <end position="225"/>
    </location>
    <ligand>
        <name>NAD(+)</name>
        <dbReference type="ChEBI" id="CHEBI:57540"/>
    </ligand>
</feature>
<evidence type="ECO:0000255" key="1">
    <source>
        <dbReference type="HAMAP-Rule" id="MF_01174"/>
    </source>
</evidence>
<organism>
    <name type="scientific">Escherichia coli O157:H7</name>
    <dbReference type="NCBI Taxonomy" id="83334"/>
    <lineage>
        <taxon>Bacteria</taxon>
        <taxon>Pseudomonadati</taxon>
        <taxon>Pseudomonadota</taxon>
        <taxon>Gammaproteobacteria</taxon>
        <taxon>Enterobacterales</taxon>
        <taxon>Enterobacteriaceae</taxon>
        <taxon>Escherichia</taxon>
    </lineage>
</organism>
<protein>
    <recommendedName>
        <fullName evidence="1">N-succinylglutamate 5-semialdehyde dehydrogenase</fullName>
        <ecNumber evidence="1">1.2.1.71</ecNumber>
    </recommendedName>
    <alternativeName>
        <fullName evidence="1">Succinylglutamic semialdehyde dehydrogenase</fullName>
        <shortName evidence="1">SGSD</shortName>
    </alternativeName>
</protein>
<gene>
    <name evidence="1" type="primary">astD</name>
    <name type="ordered locus">Z2778</name>
    <name type="ordered locus">ECs2452</name>
</gene>
<accession>Q7ADE6</accession>
<accession>Q8XDY8</accession>
<name>ASTD_ECO57</name>
<reference key="1">
    <citation type="journal article" date="2001" name="Nature">
        <title>Genome sequence of enterohaemorrhagic Escherichia coli O157:H7.</title>
        <authorList>
            <person name="Perna N.T."/>
            <person name="Plunkett G. III"/>
            <person name="Burland V."/>
            <person name="Mau B."/>
            <person name="Glasner J.D."/>
            <person name="Rose D.J."/>
            <person name="Mayhew G.F."/>
            <person name="Evans P.S."/>
            <person name="Gregor J."/>
            <person name="Kirkpatrick H.A."/>
            <person name="Posfai G."/>
            <person name="Hackett J."/>
            <person name="Klink S."/>
            <person name="Boutin A."/>
            <person name="Shao Y."/>
            <person name="Miller L."/>
            <person name="Grotbeck E.J."/>
            <person name="Davis N.W."/>
            <person name="Lim A."/>
            <person name="Dimalanta E.T."/>
            <person name="Potamousis K."/>
            <person name="Apodaca J."/>
            <person name="Anantharaman T.S."/>
            <person name="Lin J."/>
            <person name="Yen G."/>
            <person name="Schwartz D.C."/>
            <person name="Welch R.A."/>
            <person name="Blattner F.R."/>
        </authorList>
    </citation>
    <scope>NUCLEOTIDE SEQUENCE [LARGE SCALE GENOMIC DNA]</scope>
    <source>
        <strain>O157:H7 / EDL933 / ATCC 700927 / EHEC</strain>
    </source>
</reference>
<reference key="2">
    <citation type="journal article" date="2001" name="DNA Res.">
        <title>Complete genome sequence of enterohemorrhagic Escherichia coli O157:H7 and genomic comparison with a laboratory strain K-12.</title>
        <authorList>
            <person name="Hayashi T."/>
            <person name="Makino K."/>
            <person name="Ohnishi M."/>
            <person name="Kurokawa K."/>
            <person name="Ishii K."/>
            <person name="Yokoyama K."/>
            <person name="Han C.-G."/>
            <person name="Ohtsubo E."/>
            <person name="Nakayama K."/>
            <person name="Murata T."/>
            <person name="Tanaka M."/>
            <person name="Tobe T."/>
            <person name="Iida T."/>
            <person name="Takami H."/>
            <person name="Honda T."/>
            <person name="Sasakawa C."/>
            <person name="Ogasawara N."/>
            <person name="Yasunaga T."/>
            <person name="Kuhara S."/>
            <person name="Shiba T."/>
            <person name="Hattori M."/>
            <person name="Shinagawa H."/>
        </authorList>
    </citation>
    <scope>NUCLEOTIDE SEQUENCE [LARGE SCALE GENOMIC DNA]</scope>
    <source>
        <strain>O157:H7 / Sakai / RIMD 0509952 / EHEC</strain>
    </source>
</reference>
<proteinExistence type="inferred from homology"/>
<sequence>MTLWINGDWITGQGASRVKRNPVSGEVLWQGNDADAAQVGQACRAARAAFPRWARLSFAERQAVVERFAGLLERNKGELTAIIARETGKPRWEAATELTAMINKIAISIKAYHVRTGEQRSEMPDGAASLRHRPHGVLAVFGPYNFPGHLPNGHIVPALLAGNTIIFKPSELTPWSGEAVMRLWQQAGLPPGVLNLVQGGCETGQALSALEDLDGLLFTGSANTGYQLHRQLSGQPEKILALEMGGNNPLIIDEVADIDAAVHLTIQSAFVTAGQRCTCARRVLLKSGAQGDAFLARLVAVSQRLTPGNWDDEPQPFIGGLISEQAAQQVFTAWQQLEAMGGRTLLAPRLLQAGTSLLTPGIIEMTGVAGVPDEEVFGPLLRVWRYDSFEEAIRMANNTRFGLSCGLVSPEREKFDQLLLEARAGIVNWNKPLTGAASTAPFGGIGASGNHRPSAWYAADYCAWPMASLESDSLTLPATLNPGLDFSDEVVR</sequence>
<keyword id="KW-0056">Arginine metabolism</keyword>
<keyword id="KW-0520">NAD</keyword>
<keyword id="KW-0560">Oxidoreductase</keyword>
<keyword id="KW-1185">Reference proteome</keyword>
<comment type="function">
    <text evidence="1">Catalyzes the NAD-dependent reduction of succinylglutamate semialdehyde into succinylglutamate.</text>
</comment>
<comment type="catalytic activity">
    <reaction evidence="1">
        <text>N-succinyl-L-glutamate 5-semialdehyde + NAD(+) + H2O = N-succinyl-L-glutamate + NADH + 2 H(+)</text>
        <dbReference type="Rhea" id="RHEA:10812"/>
        <dbReference type="ChEBI" id="CHEBI:15377"/>
        <dbReference type="ChEBI" id="CHEBI:15378"/>
        <dbReference type="ChEBI" id="CHEBI:57540"/>
        <dbReference type="ChEBI" id="CHEBI:57945"/>
        <dbReference type="ChEBI" id="CHEBI:58520"/>
        <dbReference type="ChEBI" id="CHEBI:58763"/>
        <dbReference type="EC" id="1.2.1.71"/>
    </reaction>
</comment>
<comment type="pathway">
    <text evidence="1">Amino-acid degradation; L-arginine degradation via AST pathway; L-glutamate and succinate from L-arginine: step 4/5.</text>
</comment>
<comment type="similarity">
    <text evidence="1">Belongs to the aldehyde dehydrogenase family. AstD subfamily.</text>
</comment>
<dbReference type="EC" id="1.2.1.71" evidence="1"/>
<dbReference type="EMBL" id="AE005174">
    <property type="protein sequence ID" value="AAG56732.1"/>
    <property type="molecule type" value="Genomic_DNA"/>
</dbReference>
<dbReference type="EMBL" id="BA000007">
    <property type="protein sequence ID" value="BAB35875.1"/>
    <property type="molecule type" value="Genomic_DNA"/>
</dbReference>
<dbReference type="PIR" id="D90935">
    <property type="entry name" value="D90935"/>
</dbReference>
<dbReference type="PIR" id="H85783">
    <property type="entry name" value="H85783"/>
</dbReference>
<dbReference type="RefSeq" id="NP_310479.1">
    <property type="nucleotide sequence ID" value="NC_002695.1"/>
</dbReference>
<dbReference type="RefSeq" id="WP_000177232.1">
    <property type="nucleotide sequence ID" value="NZ_VOAI01000007.1"/>
</dbReference>
<dbReference type="SMR" id="Q7ADE6"/>
<dbReference type="STRING" id="155864.Z2778"/>
<dbReference type="GeneID" id="917113"/>
<dbReference type="KEGG" id="ece:Z2778"/>
<dbReference type="KEGG" id="ecs:ECs_2452"/>
<dbReference type="PATRIC" id="fig|386585.9.peg.2566"/>
<dbReference type="eggNOG" id="COG1012">
    <property type="taxonomic scope" value="Bacteria"/>
</dbReference>
<dbReference type="HOGENOM" id="CLU_005391_1_0_6"/>
<dbReference type="OMA" id="LIPAAWD"/>
<dbReference type="UniPathway" id="UPA00185">
    <property type="reaction ID" value="UER00282"/>
</dbReference>
<dbReference type="Proteomes" id="UP000000558">
    <property type="component" value="Chromosome"/>
</dbReference>
<dbReference type="Proteomes" id="UP000002519">
    <property type="component" value="Chromosome"/>
</dbReference>
<dbReference type="GO" id="GO:0004030">
    <property type="term" value="F:aldehyde dehydrogenase [NAD(P)+] activity"/>
    <property type="evidence" value="ECO:0007669"/>
    <property type="project" value="UniProtKB-ARBA"/>
</dbReference>
<dbReference type="GO" id="GO:0043824">
    <property type="term" value="F:succinylglutamate-semialdehyde dehydrogenase activity"/>
    <property type="evidence" value="ECO:0007669"/>
    <property type="project" value="UniProtKB-EC"/>
</dbReference>
<dbReference type="GO" id="GO:0019544">
    <property type="term" value="P:arginine catabolic process to glutamate"/>
    <property type="evidence" value="ECO:0007669"/>
    <property type="project" value="UniProtKB-UniRule"/>
</dbReference>
<dbReference type="GO" id="GO:0019545">
    <property type="term" value="P:arginine catabolic process to succinate"/>
    <property type="evidence" value="ECO:0007669"/>
    <property type="project" value="UniProtKB-UniRule"/>
</dbReference>
<dbReference type="CDD" id="cd07095">
    <property type="entry name" value="ALDH_SGSD_AstD"/>
    <property type="match status" value="1"/>
</dbReference>
<dbReference type="FunFam" id="3.40.309.10:FF:000013">
    <property type="entry name" value="N-succinylglutamate 5-semialdehyde dehydrogenase"/>
    <property type="match status" value="1"/>
</dbReference>
<dbReference type="FunFam" id="3.40.605.10:FF:000010">
    <property type="entry name" value="N-succinylglutamate 5-semialdehyde dehydrogenase"/>
    <property type="match status" value="1"/>
</dbReference>
<dbReference type="Gene3D" id="3.40.605.10">
    <property type="entry name" value="Aldehyde Dehydrogenase, Chain A, domain 1"/>
    <property type="match status" value="1"/>
</dbReference>
<dbReference type="Gene3D" id="3.40.309.10">
    <property type="entry name" value="Aldehyde Dehydrogenase, Chain A, domain 2"/>
    <property type="match status" value="1"/>
</dbReference>
<dbReference type="HAMAP" id="MF_01174">
    <property type="entry name" value="Aldedh_AstD"/>
    <property type="match status" value="1"/>
</dbReference>
<dbReference type="InterPro" id="IPR016161">
    <property type="entry name" value="Ald_DH/histidinol_DH"/>
</dbReference>
<dbReference type="InterPro" id="IPR016163">
    <property type="entry name" value="Ald_DH_C"/>
</dbReference>
<dbReference type="InterPro" id="IPR016160">
    <property type="entry name" value="Ald_DH_CS_CYS"/>
</dbReference>
<dbReference type="InterPro" id="IPR029510">
    <property type="entry name" value="Ald_DH_CS_GLU"/>
</dbReference>
<dbReference type="InterPro" id="IPR016162">
    <property type="entry name" value="Ald_DH_N"/>
</dbReference>
<dbReference type="InterPro" id="IPR015590">
    <property type="entry name" value="Aldehyde_DH_dom"/>
</dbReference>
<dbReference type="InterPro" id="IPR017649">
    <property type="entry name" value="SuccinylGlu_semiald_DH_AstD"/>
</dbReference>
<dbReference type="NCBIfam" id="TIGR03240">
    <property type="entry name" value="arg_catab_astD"/>
    <property type="match status" value="1"/>
</dbReference>
<dbReference type="NCBIfam" id="NF006992">
    <property type="entry name" value="PRK09457.1"/>
    <property type="match status" value="1"/>
</dbReference>
<dbReference type="PANTHER" id="PTHR11699">
    <property type="entry name" value="ALDEHYDE DEHYDROGENASE-RELATED"/>
    <property type="match status" value="1"/>
</dbReference>
<dbReference type="Pfam" id="PF00171">
    <property type="entry name" value="Aldedh"/>
    <property type="match status" value="1"/>
</dbReference>
<dbReference type="SUPFAM" id="SSF53720">
    <property type="entry name" value="ALDH-like"/>
    <property type="match status" value="1"/>
</dbReference>
<dbReference type="PROSITE" id="PS00070">
    <property type="entry name" value="ALDEHYDE_DEHYDR_CYS"/>
    <property type="match status" value="1"/>
</dbReference>
<dbReference type="PROSITE" id="PS00687">
    <property type="entry name" value="ALDEHYDE_DEHYDR_GLU"/>
    <property type="match status" value="1"/>
</dbReference>